<evidence type="ECO:0000256" key="1">
    <source>
        <dbReference type="SAM" id="MobiDB-lite"/>
    </source>
</evidence>
<evidence type="ECO:0000305" key="2"/>
<comment type="sequence caution" evidence="2">
    <conflict type="erroneous initiation">
        <sequence resource="EMBL-CDS" id="AAA27613"/>
    </conflict>
</comment>
<comment type="sequence caution" evidence="2">
    <conflict type="erroneous initiation">
        <sequence resource="EMBL-CDS" id="AAM39984"/>
    </conflict>
</comment>
<sequence>MPAATWTASPSPPNWPVPMPRRPPMPRSVKRDRWIALGLLLLVMGVAYLVLVHPWFTQPMLAVQDDLQSLRERELRVRVQLQQAPQVSQRLQQARQTLQSRPGFLPESSAELASAGLVQRLERAVVDASPGNRSCAISNRSPLQPETKRFTRVAVQVRLRCGTPELASVLYSLENGTPRLFVDNLNVMAQRYQLSPNESGNGLDIAFELAGYLRPGSNAGPVNTGAAPAAGEASNAP</sequence>
<dbReference type="EMBL" id="M81648">
    <property type="protein sequence ID" value="AAA27613.1"/>
    <property type="status" value="ALT_INIT"/>
    <property type="molecule type" value="Genomic_DNA"/>
</dbReference>
<dbReference type="EMBL" id="AE008922">
    <property type="protein sequence ID" value="AAM39984.1"/>
    <property type="status" value="ALT_INIT"/>
    <property type="molecule type" value="Genomic_DNA"/>
</dbReference>
<dbReference type="PIR" id="A41843">
    <property type="entry name" value="A41843"/>
</dbReference>
<dbReference type="RefSeq" id="NP_636060.1">
    <property type="nucleotide sequence ID" value="NC_003902.1"/>
</dbReference>
<dbReference type="SMR" id="P29039"/>
<dbReference type="STRING" id="190485.XCC0668"/>
<dbReference type="EnsemblBacteria" id="AAM39984">
    <property type="protein sequence ID" value="AAM39984"/>
    <property type="gene ID" value="XCC0668"/>
</dbReference>
<dbReference type="KEGG" id="xcc:XCC0668"/>
<dbReference type="PATRIC" id="fig|190485.4.peg.733"/>
<dbReference type="eggNOG" id="ENOG5030CV1">
    <property type="taxonomic scope" value="Bacteria"/>
</dbReference>
<dbReference type="HOGENOM" id="CLU_088948_0_0_6"/>
<dbReference type="OrthoDB" id="5767259at2"/>
<dbReference type="Proteomes" id="UP000001010">
    <property type="component" value="Chromosome"/>
</dbReference>
<dbReference type="InterPro" id="IPR034756">
    <property type="entry name" value="T2SSM_b"/>
</dbReference>
<dbReference type="NCBIfam" id="NF040576">
    <property type="entry name" value="T2SS_GspM_XpsM"/>
    <property type="match status" value="1"/>
</dbReference>
<dbReference type="Pfam" id="PF10741">
    <property type="entry name" value="T2SSM_b"/>
    <property type="match status" value="1"/>
</dbReference>
<proteinExistence type="predicted"/>
<keyword id="KW-1185">Reference proteome</keyword>
<organism>
    <name type="scientific">Xanthomonas campestris pv. campestris (strain ATCC 33913 / DSM 3586 / NCPPB 528 / LMG 568 / P 25)</name>
    <dbReference type="NCBI Taxonomy" id="190485"/>
    <lineage>
        <taxon>Bacteria</taxon>
        <taxon>Pseudomonadati</taxon>
        <taxon>Pseudomonadota</taxon>
        <taxon>Gammaproteobacteria</taxon>
        <taxon>Lysobacterales</taxon>
        <taxon>Lysobacteraceae</taxon>
        <taxon>Xanthomonas</taxon>
    </lineage>
</organism>
<accession>P29039</accession>
<protein>
    <recommendedName>
        <fullName>Protein XpsM</fullName>
    </recommendedName>
</protein>
<reference key="1">
    <citation type="journal article" date="1992" name="J. Bacteriol.">
        <title>Cloning and characterization of a gene required for the secretion of extracellular enzymes across the outer membrane by Xanthomonas campestris pv. campestris.</title>
        <authorList>
            <person name="Hu N.-T."/>
            <person name="Hung M.-N."/>
            <person name="Chiou S.-J."/>
            <person name="Tang F."/>
            <person name="Chiang D.-C."/>
            <person name="Huang H.-Y."/>
            <person name="Wu C.-Y."/>
        </authorList>
    </citation>
    <scope>NUCLEOTIDE SEQUENCE [GENOMIC DNA]</scope>
    <source>
        <strain>Xc1701</strain>
    </source>
</reference>
<reference key="2">
    <citation type="journal article" date="2002" name="Nature">
        <title>Comparison of the genomes of two Xanthomonas pathogens with differing host specificities.</title>
        <authorList>
            <person name="da Silva A.C.R."/>
            <person name="Ferro J.A."/>
            <person name="Reinach F.C."/>
            <person name="Farah C.S."/>
            <person name="Furlan L.R."/>
            <person name="Quaggio R.B."/>
            <person name="Monteiro-Vitorello C.B."/>
            <person name="Van Sluys M.A."/>
            <person name="Almeida N.F. Jr."/>
            <person name="Alves L.M.C."/>
            <person name="do Amaral A.M."/>
            <person name="Bertolini M.C."/>
            <person name="Camargo L.E.A."/>
            <person name="Camarotte G."/>
            <person name="Cannavan F."/>
            <person name="Cardozo J."/>
            <person name="Chambergo F."/>
            <person name="Ciapina L.P."/>
            <person name="Cicarelli R.M.B."/>
            <person name="Coutinho L.L."/>
            <person name="Cursino-Santos J.R."/>
            <person name="El-Dorry H."/>
            <person name="Faria J.B."/>
            <person name="Ferreira A.J.S."/>
            <person name="Ferreira R.C.C."/>
            <person name="Ferro M.I.T."/>
            <person name="Formighieri E.F."/>
            <person name="Franco M.C."/>
            <person name="Greggio C.C."/>
            <person name="Gruber A."/>
            <person name="Katsuyama A.M."/>
            <person name="Kishi L.T."/>
            <person name="Leite R.P."/>
            <person name="Lemos E.G.M."/>
            <person name="Lemos M.V.F."/>
            <person name="Locali E.C."/>
            <person name="Machado M.A."/>
            <person name="Madeira A.M.B.N."/>
            <person name="Martinez-Rossi N.M."/>
            <person name="Martins E.C."/>
            <person name="Meidanis J."/>
            <person name="Menck C.F.M."/>
            <person name="Miyaki C.Y."/>
            <person name="Moon D.H."/>
            <person name="Moreira L.M."/>
            <person name="Novo M.T.M."/>
            <person name="Okura V.K."/>
            <person name="Oliveira M.C."/>
            <person name="Oliveira V.R."/>
            <person name="Pereira H.A."/>
            <person name="Rossi A."/>
            <person name="Sena J.A.D."/>
            <person name="Silva C."/>
            <person name="de Souza R.F."/>
            <person name="Spinola L.A.F."/>
            <person name="Takita M.A."/>
            <person name="Tamura R.E."/>
            <person name="Teixeira E.C."/>
            <person name="Tezza R.I.D."/>
            <person name="Trindade dos Santos M."/>
            <person name="Truffi D."/>
            <person name="Tsai S.M."/>
            <person name="White F.F."/>
            <person name="Setubal J.C."/>
            <person name="Kitajima J.P."/>
        </authorList>
    </citation>
    <scope>NUCLEOTIDE SEQUENCE [LARGE SCALE GENOMIC DNA]</scope>
    <source>
        <strain>ATCC 33913 / DSM 3586 / NCPPB 528 / LMG 568 / P 25</strain>
    </source>
</reference>
<feature type="chain" id="PRO_0000066040" description="Protein XpsM">
    <location>
        <begin position="1"/>
        <end position="237"/>
    </location>
</feature>
<feature type="region of interest" description="Disordered" evidence="1">
    <location>
        <begin position="1"/>
        <end position="21"/>
    </location>
</feature>
<feature type="compositionally biased region" description="Pro residues" evidence="1">
    <location>
        <begin position="10"/>
        <end position="21"/>
    </location>
</feature>
<feature type="sequence conflict" description="In Ref. 1; AAA27613." evidence="2" ref="1">
    <original>D</original>
    <variation>E</variation>
    <location>
        <position position="66"/>
    </location>
</feature>
<gene>
    <name type="primary">xpsM</name>
    <name type="ordered locus">XCC0668</name>
</gene>
<name>XPSM_XANCP</name>